<comment type="similarity">
    <text evidence="1">Belongs to the eukaryotic ribosomal protein eS1 family.</text>
</comment>
<gene>
    <name evidence="1" type="primary">rps3ae</name>
    <name type="ordered locus">M164_1390</name>
</gene>
<accession>C4KHD2</accession>
<proteinExistence type="inferred from homology"/>
<organism>
    <name type="scientific">Saccharolobus islandicus (strain M.16.4 / Kamchatka #3)</name>
    <name type="common">Sulfolobus islandicus</name>
    <dbReference type="NCBI Taxonomy" id="426118"/>
    <lineage>
        <taxon>Archaea</taxon>
        <taxon>Thermoproteota</taxon>
        <taxon>Thermoprotei</taxon>
        <taxon>Sulfolobales</taxon>
        <taxon>Sulfolobaceae</taxon>
        <taxon>Saccharolobus</taxon>
    </lineage>
</organism>
<feature type="chain" id="PRO_1000205381" description="Small ribosomal subunit protein eS1">
    <location>
        <begin position="1"/>
        <end position="208"/>
    </location>
</feature>
<sequence length="208" mass="23616">MSAKGGTIKDKWKMKKWYSIIAPKVFGEVSLGSTPAYDVTQTIGRRVETTLYDLTGDFSQVYVHLYFKIVSNEGDRLITRFVGHELSRDYLRSLIRRKSSKVNSVFDVTTKDGYVVRVKGLVLTTYKCHQSQKTAIRKIINETISKKASELTFDDFTQEVVFGRLANEIFEATKKIYPLRKAEIEKTKVLKVPENLGKQVESSSVSSG</sequence>
<evidence type="ECO:0000255" key="1">
    <source>
        <dbReference type="HAMAP-Rule" id="MF_00359"/>
    </source>
</evidence>
<evidence type="ECO:0000305" key="2"/>
<reference key="1">
    <citation type="journal article" date="2009" name="Proc. Natl. Acad. Sci. U.S.A.">
        <title>Biogeography of the Sulfolobus islandicus pan-genome.</title>
        <authorList>
            <person name="Reno M.L."/>
            <person name="Held N.L."/>
            <person name="Fields C.J."/>
            <person name="Burke P.V."/>
            <person name="Whitaker R.J."/>
        </authorList>
    </citation>
    <scope>NUCLEOTIDE SEQUENCE [LARGE SCALE GENOMIC DNA]</scope>
    <source>
        <strain>M.16.4 / Kamchatka #3</strain>
    </source>
</reference>
<keyword id="KW-0687">Ribonucleoprotein</keyword>
<keyword id="KW-0689">Ribosomal protein</keyword>
<protein>
    <recommendedName>
        <fullName evidence="1">Small ribosomal subunit protein eS1</fullName>
    </recommendedName>
    <alternativeName>
        <fullName evidence="2">30S ribosomal protein S3Ae</fullName>
    </alternativeName>
    <alternativeName>
        <fullName evidence="1">Ribosomal protein S1e</fullName>
    </alternativeName>
</protein>
<name>RS3A_SACI6</name>
<dbReference type="EMBL" id="CP001402">
    <property type="protein sequence ID" value="ACR41996.1"/>
    <property type="molecule type" value="Genomic_DNA"/>
</dbReference>
<dbReference type="RefSeq" id="WP_012711394.1">
    <property type="nucleotide sequence ID" value="NC_012726.1"/>
</dbReference>
<dbReference type="SMR" id="C4KHD2"/>
<dbReference type="KEGG" id="sid:M164_1390"/>
<dbReference type="HOGENOM" id="CLU_062507_1_0_2"/>
<dbReference type="Proteomes" id="UP000001479">
    <property type="component" value="Chromosome"/>
</dbReference>
<dbReference type="GO" id="GO:1990904">
    <property type="term" value="C:ribonucleoprotein complex"/>
    <property type="evidence" value="ECO:0007669"/>
    <property type="project" value="UniProtKB-KW"/>
</dbReference>
<dbReference type="GO" id="GO:0005840">
    <property type="term" value="C:ribosome"/>
    <property type="evidence" value="ECO:0007669"/>
    <property type="project" value="UniProtKB-KW"/>
</dbReference>
<dbReference type="GO" id="GO:0003735">
    <property type="term" value="F:structural constituent of ribosome"/>
    <property type="evidence" value="ECO:0007669"/>
    <property type="project" value="InterPro"/>
</dbReference>
<dbReference type="GO" id="GO:0006412">
    <property type="term" value="P:translation"/>
    <property type="evidence" value="ECO:0007669"/>
    <property type="project" value="UniProtKB-UniRule"/>
</dbReference>
<dbReference type="HAMAP" id="MF_00359">
    <property type="entry name" value="Ribosomal_eS1"/>
    <property type="match status" value="1"/>
</dbReference>
<dbReference type="InterPro" id="IPR001593">
    <property type="entry name" value="Ribosomal_eS1"/>
</dbReference>
<dbReference type="InterPro" id="IPR030838">
    <property type="entry name" value="Ribosomal_eS1_arc"/>
</dbReference>
<dbReference type="NCBIfam" id="NF003142">
    <property type="entry name" value="PRK04057.1"/>
    <property type="match status" value="1"/>
</dbReference>
<dbReference type="PANTHER" id="PTHR11830">
    <property type="entry name" value="40S RIBOSOMAL PROTEIN S3A"/>
    <property type="match status" value="1"/>
</dbReference>
<dbReference type="Pfam" id="PF01015">
    <property type="entry name" value="Ribosomal_S3Ae"/>
    <property type="match status" value="1"/>
</dbReference>
<dbReference type="SMART" id="SM01397">
    <property type="entry name" value="Ribosomal_S3Ae"/>
    <property type="match status" value="1"/>
</dbReference>